<evidence type="ECO:0000255" key="1">
    <source>
        <dbReference type="PROSITE-ProRule" id="PRU00227"/>
    </source>
</evidence>
<evidence type="ECO:0000256" key="2">
    <source>
        <dbReference type="SAM" id="MobiDB-lite"/>
    </source>
</evidence>
<evidence type="ECO:0000269" key="3">
    <source>
    </source>
</evidence>
<evidence type="ECO:0000305" key="4"/>
<evidence type="ECO:0000312" key="5">
    <source>
        <dbReference type="EMBL" id="AAC98670.1"/>
    </source>
</evidence>
<dbReference type="EMBL" id="AF057038">
    <property type="protein sequence ID" value="AAC98670.1"/>
    <property type="molecule type" value="Genomic_DNA"/>
</dbReference>
<dbReference type="VEuPathDB" id="FungiDB:C3_06850W_A"/>
<dbReference type="VEuPathDB" id="FungiDB:CAWG_02995"/>
<dbReference type="GO" id="GO:0005634">
    <property type="term" value="C:nucleus"/>
    <property type="evidence" value="ECO:0000305"/>
    <property type="project" value="UniProtKB"/>
</dbReference>
<dbReference type="GO" id="GO:0003677">
    <property type="term" value="F:DNA binding"/>
    <property type="evidence" value="ECO:0007669"/>
    <property type="project" value="UniProtKB-KW"/>
</dbReference>
<dbReference type="GO" id="GO:0003700">
    <property type="term" value="F:DNA-binding transcription factor activity"/>
    <property type="evidence" value="ECO:0000314"/>
    <property type="project" value="UniProtKB"/>
</dbReference>
<dbReference type="GO" id="GO:0000981">
    <property type="term" value="F:DNA-binding transcription factor activity, RNA polymerase II-specific"/>
    <property type="evidence" value="ECO:0007669"/>
    <property type="project" value="InterPro"/>
</dbReference>
<dbReference type="GO" id="GO:0008270">
    <property type="term" value="F:zinc ion binding"/>
    <property type="evidence" value="ECO:0007669"/>
    <property type="project" value="InterPro"/>
</dbReference>
<dbReference type="GO" id="GO:0006355">
    <property type="term" value="P:regulation of DNA-templated transcription"/>
    <property type="evidence" value="ECO:0000314"/>
    <property type="project" value="UniProtKB"/>
</dbReference>
<dbReference type="CDD" id="cd00067">
    <property type="entry name" value="GAL4"/>
    <property type="match status" value="1"/>
</dbReference>
<dbReference type="FunFam" id="4.10.240.10:FF:000134">
    <property type="entry name" value="Fluconazole resistance protein 1"/>
    <property type="match status" value="1"/>
</dbReference>
<dbReference type="Gene3D" id="4.10.240.10">
    <property type="entry name" value="Zn(2)-C6 fungal-type DNA-binding domain"/>
    <property type="match status" value="1"/>
</dbReference>
<dbReference type="InterPro" id="IPR052783">
    <property type="entry name" value="Metabolic/Drug-Res_Regulator"/>
</dbReference>
<dbReference type="InterPro" id="IPR036864">
    <property type="entry name" value="Zn2-C6_fun-type_DNA-bd_sf"/>
</dbReference>
<dbReference type="InterPro" id="IPR001138">
    <property type="entry name" value="Zn2Cys6_DnaBD"/>
</dbReference>
<dbReference type="PANTHER" id="PTHR47655">
    <property type="entry name" value="QUINIC ACID UTILIZATION ACTIVATOR"/>
    <property type="match status" value="1"/>
</dbReference>
<dbReference type="PANTHER" id="PTHR47655:SF3">
    <property type="entry name" value="ZN(II)2CYS6 TRANSCRIPTION FACTOR (EUROFUNG)"/>
    <property type="match status" value="1"/>
</dbReference>
<dbReference type="Pfam" id="PF00172">
    <property type="entry name" value="Zn_clus"/>
    <property type="match status" value="1"/>
</dbReference>
<dbReference type="SMART" id="SM00066">
    <property type="entry name" value="GAL4"/>
    <property type="match status" value="1"/>
</dbReference>
<dbReference type="SUPFAM" id="SSF57701">
    <property type="entry name" value="Zn2/Cys6 DNA-binding domain"/>
    <property type="match status" value="1"/>
</dbReference>
<dbReference type="PROSITE" id="PS00463">
    <property type="entry name" value="ZN2_CY6_FUNGAL_1"/>
    <property type="match status" value="1"/>
</dbReference>
<dbReference type="PROSITE" id="PS50048">
    <property type="entry name" value="ZN2_CY6_FUNGAL_2"/>
    <property type="match status" value="1"/>
</dbReference>
<keyword id="KW-0238">DNA-binding</keyword>
<keyword id="KW-0479">Metal-binding</keyword>
<keyword id="KW-0539">Nucleus</keyword>
<keyword id="KW-0804">Transcription</keyword>
<keyword id="KW-0805">Transcription regulation</keyword>
<keyword id="KW-0862">Zinc</keyword>
<comment type="function">
    <text evidence="3">Transcription factor that acts as a negative regulator of fluconazole resistance in C.albicans. Also confers fluconazole resistance in S.cerevisiae by activation of the PDR5 gene.</text>
</comment>
<comment type="subcellular location">
    <subcellularLocation>
        <location evidence="4">Nucleus</location>
    </subcellularLocation>
</comment>
<accession>O93870</accession>
<protein>
    <recommendedName>
        <fullName>Fluconazole resistance protein 1</fullName>
    </recommendedName>
</protein>
<sequence length="517" mass="56875">MSDDHSIHSHTQGLHHIKKKRVGKACDSCRIKKTKCDGKKPCNRCTLDNKICVFTEKKKTKEKKHPSGYVELLEARLDILTRSLEKLIELSRPHLQFIDDIITEEKSVDQEKSSPASSTPNSSSSDHHDDVEEQNSTGVVAPINKVVSYLIKEQGLLKNIPLEWEQGTEIAANFDPNRNLKSSSRLFAEHKGEAFIGSPVTSPQQMPTSNPFRRTSMFKEELESPSSDHYNESIFSQSVDEPYIKKEPNSAQFSKGTFSPQQQQLQQQQQMLNQFSLNTSRDISDIESDSSNKEDGLNSGSVSPPTSNYRSFSLFSDSNGEPILGKTSSLTSLTNKYENHSLSSPQTAINPVFNNSTTGPILTTLRRNSSSHSQKTLGSIQLQQKPRGSVHKPVRNHSRVSSFDKRMESTATAAATVAAVSGSVQLSQNTTPQNLPHLDNSQNNNYLRDNGMNNIGAGSVGGGLTFGAPSFTQPLSPSDDAIVYPTNQFTNRPATVSTFGGGLDVLVDNSLDPFFNI</sequence>
<feature type="chain" id="PRO_0000114949" description="Fluconazole resistance protein 1">
    <location>
        <begin position="1"/>
        <end position="517"/>
    </location>
</feature>
<feature type="DNA-binding region" description="Zn(2)-C6 fungal-type" evidence="1">
    <location>
        <begin position="26"/>
        <end position="52"/>
    </location>
</feature>
<feature type="region of interest" description="Disordered" evidence="2">
    <location>
        <begin position="106"/>
        <end position="137"/>
    </location>
</feature>
<feature type="region of interest" description="Disordered" evidence="2">
    <location>
        <begin position="250"/>
        <end position="270"/>
    </location>
</feature>
<feature type="region of interest" description="Disordered" evidence="2">
    <location>
        <begin position="284"/>
        <end position="307"/>
    </location>
</feature>
<feature type="region of interest" description="Disordered" evidence="2">
    <location>
        <begin position="378"/>
        <end position="403"/>
    </location>
</feature>
<feature type="compositionally biased region" description="Low complexity" evidence="2">
    <location>
        <begin position="113"/>
        <end position="124"/>
    </location>
</feature>
<feature type="compositionally biased region" description="Polar residues" evidence="2">
    <location>
        <begin position="250"/>
        <end position="260"/>
    </location>
</feature>
<feature type="compositionally biased region" description="Low complexity" evidence="2">
    <location>
        <begin position="261"/>
        <end position="270"/>
    </location>
</feature>
<feature type="compositionally biased region" description="Polar residues" evidence="2">
    <location>
        <begin position="298"/>
        <end position="307"/>
    </location>
</feature>
<feature type="compositionally biased region" description="Basic residues" evidence="2">
    <location>
        <begin position="388"/>
        <end position="398"/>
    </location>
</feature>
<name>FCR1_CANAX</name>
<gene>
    <name type="primary">FCR1</name>
</gene>
<reference evidence="4" key="1">
    <citation type="journal article" date="1999" name="J. Bacteriol.">
        <title>Isolation of a putative Candida albicans transcriptional regulator involved in pleiotropic drug resistance by functional complementation of a pdr1 pdr3 mutation in Saccharomyces cerevisiae.</title>
        <authorList>
            <person name="Talibi D."/>
            <person name="Raymond M."/>
        </authorList>
    </citation>
    <scope>NUCLEOTIDE SEQUENCE [GENOMIC DNA]</scope>
    <scope>FUNCTION</scope>
    <source>
        <strain>ATCC 11651 / B792 / 171D</strain>
    </source>
</reference>
<proteinExistence type="predicted"/>
<organism evidence="5">
    <name type="scientific">Candida albicans</name>
    <name type="common">Yeast</name>
    <dbReference type="NCBI Taxonomy" id="5476"/>
    <lineage>
        <taxon>Eukaryota</taxon>
        <taxon>Fungi</taxon>
        <taxon>Dikarya</taxon>
        <taxon>Ascomycota</taxon>
        <taxon>Saccharomycotina</taxon>
        <taxon>Pichiomycetes</taxon>
        <taxon>Debaryomycetaceae</taxon>
        <taxon>Candida/Lodderomyces clade</taxon>
        <taxon>Candida</taxon>
    </lineage>
</organism>